<protein>
    <recommendedName>
        <fullName evidence="1">Small ribosomal subunit protein uS10</fullName>
    </recommendedName>
    <alternativeName>
        <fullName evidence="2">30S ribosomal protein S10</fullName>
    </alternativeName>
</protein>
<gene>
    <name evidence="1" type="primary">rpsJ</name>
    <name type="ordered locus">APL_1759</name>
</gene>
<dbReference type="EMBL" id="CP000569">
    <property type="protein sequence ID" value="ABN74843.1"/>
    <property type="molecule type" value="Genomic_DNA"/>
</dbReference>
<dbReference type="RefSeq" id="WP_001181005.1">
    <property type="nucleotide sequence ID" value="NC_009053.1"/>
</dbReference>
<dbReference type="SMR" id="A3N357"/>
<dbReference type="STRING" id="416269.APL_1759"/>
<dbReference type="EnsemblBacteria" id="ABN74843">
    <property type="protein sequence ID" value="ABN74843"/>
    <property type="gene ID" value="APL_1759"/>
</dbReference>
<dbReference type="GeneID" id="98390443"/>
<dbReference type="KEGG" id="apl:APL_1759"/>
<dbReference type="eggNOG" id="COG0051">
    <property type="taxonomic scope" value="Bacteria"/>
</dbReference>
<dbReference type="HOGENOM" id="CLU_122625_1_3_6"/>
<dbReference type="Proteomes" id="UP000001432">
    <property type="component" value="Chromosome"/>
</dbReference>
<dbReference type="GO" id="GO:1990904">
    <property type="term" value="C:ribonucleoprotein complex"/>
    <property type="evidence" value="ECO:0007669"/>
    <property type="project" value="UniProtKB-KW"/>
</dbReference>
<dbReference type="GO" id="GO:0005840">
    <property type="term" value="C:ribosome"/>
    <property type="evidence" value="ECO:0007669"/>
    <property type="project" value="UniProtKB-KW"/>
</dbReference>
<dbReference type="GO" id="GO:0003735">
    <property type="term" value="F:structural constituent of ribosome"/>
    <property type="evidence" value="ECO:0007669"/>
    <property type="project" value="InterPro"/>
</dbReference>
<dbReference type="GO" id="GO:0000049">
    <property type="term" value="F:tRNA binding"/>
    <property type="evidence" value="ECO:0007669"/>
    <property type="project" value="UniProtKB-UniRule"/>
</dbReference>
<dbReference type="GO" id="GO:0006412">
    <property type="term" value="P:translation"/>
    <property type="evidence" value="ECO:0007669"/>
    <property type="project" value="UniProtKB-UniRule"/>
</dbReference>
<dbReference type="FunFam" id="3.30.70.600:FF:000001">
    <property type="entry name" value="30S ribosomal protein S10"/>
    <property type="match status" value="1"/>
</dbReference>
<dbReference type="Gene3D" id="3.30.70.600">
    <property type="entry name" value="Ribosomal protein S10 domain"/>
    <property type="match status" value="1"/>
</dbReference>
<dbReference type="HAMAP" id="MF_00508">
    <property type="entry name" value="Ribosomal_uS10"/>
    <property type="match status" value="1"/>
</dbReference>
<dbReference type="InterPro" id="IPR001848">
    <property type="entry name" value="Ribosomal_uS10"/>
</dbReference>
<dbReference type="InterPro" id="IPR018268">
    <property type="entry name" value="Ribosomal_uS10_CS"/>
</dbReference>
<dbReference type="InterPro" id="IPR027486">
    <property type="entry name" value="Ribosomal_uS10_dom"/>
</dbReference>
<dbReference type="InterPro" id="IPR036838">
    <property type="entry name" value="Ribosomal_uS10_dom_sf"/>
</dbReference>
<dbReference type="NCBIfam" id="NF001861">
    <property type="entry name" value="PRK00596.1"/>
    <property type="match status" value="1"/>
</dbReference>
<dbReference type="NCBIfam" id="TIGR01049">
    <property type="entry name" value="rpsJ_bact"/>
    <property type="match status" value="1"/>
</dbReference>
<dbReference type="PANTHER" id="PTHR11700">
    <property type="entry name" value="30S RIBOSOMAL PROTEIN S10 FAMILY MEMBER"/>
    <property type="match status" value="1"/>
</dbReference>
<dbReference type="Pfam" id="PF00338">
    <property type="entry name" value="Ribosomal_S10"/>
    <property type="match status" value="1"/>
</dbReference>
<dbReference type="PRINTS" id="PR00971">
    <property type="entry name" value="RIBOSOMALS10"/>
</dbReference>
<dbReference type="SMART" id="SM01403">
    <property type="entry name" value="Ribosomal_S10"/>
    <property type="match status" value="1"/>
</dbReference>
<dbReference type="SUPFAM" id="SSF54999">
    <property type="entry name" value="Ribosomal protein S10"/>
    <property type="match status" value="1"/>
</dbReference>
<dbReference type="PROSITE" id="PS00361">
    <property type="entry name" value="RIBOSOMAL_S10"/>
    <property type="match status" value="1"/>
</dbReference>
<reference key="1">
    <citation type="journal article" date="2008" name="J. Bacteriol.">
        <title>The complete genome sequence of Actinobacillus pleuropneumoniae L20 (serotype 5b).</title>
        <authorList>
            <person name="Foote S.J."/>
            <person name="Bosse J.T."/>
            <person name="Bouevitch A.B."/>
            <person name="Langford P.R."/>
            <person name="Young N.M."/>
            <person name="Nash J.H.E."/>
        </authorList>
    </citation>
    <scope>NUCLEOTIDE SEQUENCE [LARGE SCALE GENOMIC DNA]</scope>
    <source>
        <strain>L20</strain>
    </source>
</reference>
<evidence type="ECO:0000255" key="1">
    <source>
        <dbReference type="HAMAP-Rule" id="MF_00508"/>
    </source>
</evidence>
<evidence type="ECO:0000305" key="2"/>
<sequence length="103" mass="11767">MQNQRIRIRLKAFDHRLIDQSTAEIVETAKRTGAQVRGPIPLPTRKERFTVLISPHVNKDARDQYEIRTHKRLVDIVEPTEKTVDALMRLDLAAGVDVQISLG</sequence>
<comment type="function">
    <text evidence="1">Involved in the binding of tRNA to the ribosomes.</text>
</comment>
<comment type="subunit">
    <text evidence="1">Part of the 30S ribosomal subunit.</text>
</comment>
<comment type="similarity">
    <text evidence="1">Belongs to the universal ribosomal protein uS10 family.</text>
</comment>
<accession>A3N357</accession>
<feature type="chain" id="PRO_1000014980" description="Small ribosomal subunit protein uS10">
    <location>
        <begin position="1"/>
        <end position="103"/>
    </location>
</feature>
<name>RS10_ACTP2</name>
<proteinExistence type="inferred from homology"/>
<organism>
    <name type="scientific">Actinobacillus pleuropneumoniae serotype 5b (strain L20)</name>
    <dbReference type="NCBI Taxonomy" id="416269"/>
    <lineage>
        <taxon>Bacteria</taxon>
        <taxon>Pseudomonadati</taxon>
        <taxon>Pseudomonadota</taxon>
        <taxon>Gammaproteobacteria</taxon>
        <taxon>Pasteurellales</taxon>
        <taxon>Pasteurellaceae</taxon>
        <taxon>Actinobacillus</taxon>
    </lineage>
</organism>
<keyword id="KW-1185">Reference proteome</keyword>
<keyword id="KW-0687">Ribonucleoprotein</keyword>
<keyword id="KW-0689">Ribosomal protein</keyword>